<proteinExistence type="inferred from homology"/>
<sequence>MLSYLKKNLRSYFSSRVLIFTLAIAAIIFACATFYVISLESKNFSTIIGFLLVDLAIFLILGVLLTQKFFTQNSNNDSSKLQNRIVIAFSLVAAIPTIIVSVFSVYFFNLSVQAWFDKKISTVLDQSVIVAESYIAEHKLQLKETALAVAEDLSDMYYDLIHNPALFTKTLNTEAEMRSLDEAIVLNKSTNTIVANSYLSFSLSFATIPAHLIKKADLGEPVEVKSDPTKIRMLIKLKEYNDVYLLVGRLVDNKIIDHIDATNGAAAEYNSLKNEIDNIQIKFSIMFIFIALLLLFVAISFGVIFTAKIVKPIKKLVTATDKVKDGDLTVQVPENEVDKDEIGTLYAAFNRMIKQLSRQQRDLVIAQRAMAWSDVAKKVAHEIKNPLTPILLASERLLKKFSPEIKEKEEFENYLKMIIRHTNDIKNIVSEFVLFARLPAPKFTKSELVYLVKHIVEARKLLNDNILYKFESNVDQFDFMCDATQINQVMINLLKNAEESIEGRESGKIEVTIDAKDDFISVIVIDSGKGFPPELIGKATESYVTTSSKGMGVGLAIVKRIVEEHCGILDIANREEEGAIIDIKFDLKKLDLKVGRSGG</sequence>
<evidence type="ECO:0000250" key="1"/>
<evidence type="ECO:0000255" key="2"/>
<evidence type="ECO:0000255" key="3">
    <source>
        <dbReference type="PROSITE-ProRule" id="PRU00102"/>
    </source>
</evidence>
<evidence type="ECO:0000255" key="4">
    <source>
        <dbReference type="PROSITE-ProRule" id="PRU00107"/>
    </source>
</evidence>
<evidence type="ECO:0000305" key="5"/>
<name>NTRYL_RICFE</name>
<reference key="1">
    <citation type="journal article" date="2005" name="PLoS Biol.">
        <title>The genome sequence of Rickettsia felis identifies the first putative conjugative plasmid in an obligate intracellular parasite.</title>
        <authorList>
            <person name="Ogata H."/>
            <person name="Renesto P."/>
            <person name="Audic S."/>
            <person name="Robert C."/>
            <person name="Blanc G."/>
            <person name="Fournier P.-E."/>
            <person name="Parinello H."/>
            <person name="Claverie J.-M."/>
            <person name="Raoult D."/>
        </authorList>
    </citation>
    <scope>NUCLEOTIDE SEQUENCE [LARGE SCALE GENOMIC DNA]</scope>
    <source>
        <strain>ATCC VR-1525 / URRWXCal2</strain>
    </source>
</reference>
<accession>Q4UMD4</accession>
<feature type="chain" id="PRO_0000282374" description="Putative sensor histidine kinase NtrY-like">
    <location>
        <begin position="1"/>
        <end position="599"/>
    </location>
</feature>
<feature type="transmembrane region" description="Helical" evidence="2">
    <location>
        <begin position="17"/>
        <end position="37"/>
    </location>
</feature>
<feature type="transmembrane region" description="Helical" evidence="2">
    <location>
        <begin position="44"/>
        <end position="64"/>
    </location>
</feature>
<feature type="transmembrane region" description="Helical" evidence="2">
    <location>
        <begin position="85"/>
        <end position="105"/>
    </location>
</feature>
<feature type="transmembrane region" description="Helical" evidence="2">
    <location>
        <begin position="285"/>
        <end position="305"/>
    </location>
</feature>
<feature type="domain" description="HAMP" evidence="3">
    <location>
        <begin position="307"/>
        <end position="361"/>
    </location>
</feature>
<feature type="domain" description="Histidine kinase" evidence="4">
    <location>
        <begin position="378"/>
        <end position="589"/>
    </location>
</feature>
<feature type="modified residue" description="Phosphohistidine; by autocatalysis" evidence="4">
    <location>
        <position position="381"/>
    </location>
</feature>
<comment type="function">
    <text evidence="1">Member of the two-component regulatory system RF_0427/RF_0895.</text>
</comment>
<comment type="catalytic activity">
    <reaction>
        <text>ATP + protein L-histidine = ADP + protein N-phospho-L-histidine.</text>
        <dbReference type="EC" id="2.7.13.3"/>
    </reaction>
</comment>
<comment type="subcellular location">
    <subcellularLocation>
        <location evidence="5">Cell membrane</location>
        <topology evidence="5">Multi-pass membrane protein</topology>
    </subcellularLocation>
</comment>
<gene>
    <name type="ordered locus">RF_0427</name>
</gene>
<protein>
    <recommendedName>
        <fullName>Putative sensor histidine kinase NtrY-like</fullName>
        <ecNumber>2.7.13.3</ecNumber>
    </recommendedName>
</protein>
<organism>
    <name type="scientific">Rickettsia felis (strain ATCC VR-1525 / URRWXCal2)</name>
    <name type="common">Rickettsia azadi</name>
    <dbReference type="NCBI Taxonomy" id="315456"/>
    <lineage>
        <taxon>Bacteria</taxon>
        <taxon>Pseudomonadati</taxon>
        <taxon>Pseudomonadota</taxon>
        <taxon>Alphaproteobacteria</taxon>
        <taxon>Rickettsiales</taxon>
        <taxon>Rickettsiaceae</taxon>
        <taxon>Rickettsieae</taxon>
        <taxon>Rickettsia</taxon>
        <taxon>spotted fever group</taxon>
    </lineage>
</organism>
<dbReference type="EC" id="2.7.13.3"/>
<dbReference type="EMBL" id="CP000053">
    <property type="protein sequence ID" value="AAY61278.1"/>
    <property type="molecule type" value="Genomic_DNA"/>
</dbReference>
<dbReference type="SMR" id="Q4UMD4"/>
<dbReference type="STRING" id="315456.RF_0427"/>
<dbReference type="KEGG" id="rfe:RF_0427"/>
<dbReference type="eggNOG" id="COG5000">
    <property type="taxonomic scope" value="Bacteria"/>
</dbReference>
<dbReference type="HOGENOM" id="CLU_019564_1_0_5"/>
<dbReference type="OrthoDB" id="9776727at2"/>
<dbReference type="Proteomes" id="UP000008548">
    <property type="component" value="Chromosome"/>
</dbReference>
<dbReference type="GO" id="GO:0005886">
    <property type="term" value="C:plasma membrane"/>
    <property type="evidence" value="ECO:0007669"/>
    <property type="project" value="UniProtKB-SubCell"/>
</dbReference>
<dbReference type="GO" id="GO:0005524">
    <property type="term" value="F:ATP binding"/>
    <property type="evidence" value="ECO:0007669"/>
    <property type="project" value="UniProtKB-KW"/>
</dbReference>
<dbReference type="GO" id="GO:0000155">
    <property type="term" value="F:phosphorelay sensor kinase activity"/>
    <property type="evidence" value="ECO:0007669"/>
    <property type="project" value="InterPro"/>
</dbReference>
<dbReference type="CDD" id="cd06225">
    <property type="entry name" value="HAMP"/>
    <property type="match status" value="1"/>
</dbReference>
<dbReference type="CDD" id="cd16944">
    <property type="entry name" value="HATPase_NtrY-like"/>
    <property type="match status" value="1"/>
</dbReference>
<dbReference type="CDD" id="cd00082">
    <property type="entry name" value="HisKA"/>
    <property type="match status" value="1"/>
</dbReference>
<dbReference type="Gene3D" id="1.10.287.130">
    <property type="match status" value="1"/>
</dbReference>
<dbReference type="Gene3D" id="6.10.340.10">
    <property type="match status" value="1"/>
</dbReference>
<dbReference type="Gene3D" id="3.30.565.10">
    <property type="entry name" value="Histidine kinase-like ATPase, C-terminal domain"/>
    <property type="match status" value="1"/>
</dbReference>
<dbReference type="InterPro" id="IPR003660">
    <property type="entry name" value="HAMP_dom"/>
</dbReference>
<dbReference type="InterPro" id="IPR036890">
    <property type="entry name" value="HATPase_C_sf"/>
</dbReference>
<dbReference type="InterPro" id="IPR005467">
    <property type="entry name" value="His_kinase_dom"/>
</dbReference>
<dbReference type="InterPro" id="IPR003661">
    <property type="entry name" value="HisK_dim/P_dom"/>
</dbReference>
<dbReference type="InterPro" id="IPR036097">
    <property type="entry name" value="HisK_dim/P_sf"/>
</dbReference>
<dbReference type="InterPro" id="IPR045671">
    <property type="entry name" value="NtrY-like_N"/>
</dbReference>
<dbReference type="InterPro" id="IPR004358">
    <property type="entry name" value="Sig_transdc_His_kin-like_C"/>
</dbReference>
<dbReference type="PANTHER" id="PTHR43065:SF10">
    <property type="entry name" value="PEROXIDE STRESS-ACTIVATED HISTIDINE KINASE MAK3"/>
    <property type="match status" value="1"/>
</dbReference>
<dbReference type="PANTHER" id="PTHR43065">
    <property type="entry name" value="SENSOR HISTIDINE KINASE"/>
    <property type="match status" value="1"/>
</dbReference>
<dbReference type="Pfam" id="PF00672">
    <property type="entry name" value="HAMP"/>
    <property type="match status" value="1"/>
</dbReference>
<dbReference type="Pfam" id="PF02518">
    <property type="entry name" value="HATPase_c"/>
    <property type="match status" value="1"/>
</dbReference>
<dbReference type="Pfam" id="PF00512">
    <property type="entry name" value="HisKA"/>
    <property type="match status" value="1"/>
</dbReference>
<dbReference type="Pfam" id="PF19312">
    <property type="entry name" value="NtrY_N"/>
    <property type="match status" value="1"/>
</dbReference>
<dbReference type="PRINTS" id="PR00344">
    <property type="entry name" value="BCTRLSENSOR"/>
</dbReference>
<dbReference type="SMART" id="SM00304">
    <property type="entry name" value="HAMP"/>
    <property type="match status" value="1"/>
</dbReference>
<dbReference type="SMART" id="SM00387">
    <property type="entry name" value="HATPase_c"/>
    <property type="match status" value="1"/>
</dbReference>
<dbReference type="SMART" id="SM00388">
    <property type="entry name" value="HisKA"/>
    <property type="match status" value="1"/>
</dbReference>
<dbReference type="SUPFAM" id="SSF55874">
    <property type="entry name" value="ATPase domain of HSP90 chaperone/DNA topoisomerase II/histidine kinase"/>
    <property type="match status" value="1"/>
</dbReference>
<dbReference type="SUPFAM" id="SSF158472">
    <property type="entry name" value="HAMP domain-like"/>
    <property type="match status" value="1"/>
</dbReference>
<dbReference type="SUPFAM" id="SSF47384">
    <property type="entry name" value="Homodimeric domain of signal transducing histidine kinase"/>
    <property type="match status" value="1"/>
</dbReference>
<dbReference type="PROSITE" id="PS50885">
    <property type="entry name" value="HAMP"/>
    <property type="match status" value="1"/>
</dbReference>
<dbReference type="PROSITE" id="PS50109">
    <property type="entry name" value="HIS_KIN"/>
    <property type="match status" value="1"/>
</dbReference>
<keyword id="KW-0067">ATP-binding</keyword>
<keyword id="KW-1003">Cell membrane</keyword>
<keyword id="KW-0418">Kinase</keyword>
<keyword id="KW-0472">Membrane</keyword>
<keyword id="KW-0547">Nucleotide-binding</keyword>
<keyword id="KW-0597">Phosphoprotein</keyword>
<keyword id="KW-0808">Transferase</keyword>
<keyword id="KW-0812">Transmembrane</keyword>
<keyword id="KW-1133">Transmembrane helix</keyword>
<keyword id="KW-0902">Two-component regulatory system</keyword>